<proteinExistence type="inferred from homology"/>
<organism>
    <name type="scientific">Hyphomonas neptunium (strain ATCC 15444)</name>
    <dbReference type="NCBI Taxonomy" id="228405"/>
    <lineage>
        <taxon>Bacteria</taxon>
        <taxon>Pseudomonadati</taxon>
        <taxon>Pseudomonadota</taxon>
        <taxon>Alphaproteobacteria</taxon>
        <taxon>Hyphomonadales</taxon>
        <taxon>Hyphomonadaceae</taxon>
        <taxon>Hyphomonas</taxon>
    </lineage>
</organism>
<comment type="function">
    <text evidence="1">Catalyzes the reversible interconversion of serine and glycine with tetrahydrofolate (THF) serving as the one-carbon carrier. This reaction serves as the major source of one-carbon groups required for the biosynthesis of purines, thymidylate, methionine, and other important biomolecules. Also exhibits THF-independent aldolase activity toward beta-hydroxyamino acids, producing glycine and aldehydes, via a retro-aldol mechanism.</text>
</comment>
<comment type="catalytic activity">
    <reaction evidence="1">
        <text>(6R)-5,10-methylene-5,6,7,8-tetrahydrofolate + glycine + H2O = (6S)-5,6,7,8-tetrahydrofolate + L-serine</text>
        <dbReference type="Rhea" id="RHEA:15481"/>
        <dbReference type="ChEBI" id="CHEBI:15377"/>
        <dbReference type="ChEBI" id="CHEBI:15636"/>
        <dbReference type="ChEBI" id="CHEBI:33384"/>
        <dbReference type="ChEBI" id="CHEBI:57305"/>
        <dbReference type="ChEBI" id="CHEBI:57453"/>
        <dbReference type="EC" id="2.1.2.1"/>
    </reaction>
</comment>
<comment type="cofactor">
    <cofactor evidence="1">
        <name>pyridoxal 5'-phosphate</name>
        <dbReference type="ChEBI" id="CHEBI:597326"/>
    </cofactor>
</comment>
<comment type="pathway">
    <text evidence="1">One-carbon metabolism; tetrahydrofolate interconversion.</text>
</comment>
<comment type="pathway">
    <text evidence="1">Amino-acid biosynthesis; glycine biosynthesis; glycine from L-serine: step 1/1.</text>
</comment>
<comment type="subunit">
    <text evidence="1">Homodimer.</text>
</comment>
<comment type="subcellular location">
    <subcellularLocation>
        <location evidence="1">Cytoplasm</location>
    </subcellularLocation>
</comment>
<comment type="similarity">
    <text evidence="1">Belongs to the SHMT family.</text>
</comment>
<name>GLYA_HYPNA</name>
<reference key="1">
    <citation type="journal article" date="2006" name="J. Bacteriol.">
        <title>Comparative genomic evidence for a close relationship between the dimorphic prosthecate bacteria Hyphomonas neptunium and Caulobacter crescentus.</title>
        <authorList>
            <person name="Badger J.H."/>
            <person name="Hoover T.R."/>
            <person name="Brun Y.V."/>
            <person name="Weiner R.M."/>
            <person name="Laub M.T."/>
            <person name="Alexandre G."/>
            <person name="Mrazek J."/>
            <person name="Ren Q."/>
            <person name="Paulsen I.T."/>
            <person name="Nelson K.E."/>
            <person name="Khouri H.M."/>
            <person name="Radune D."/>
            <person name="Sosa J."/>
            <person name="Dodson R.J."/>
            <person name="Sullivan S.A."/>
            <person name="Rosovitz M.J."/>
            <person name="Madupu R."/>
            <person name="Brinkac L.M."/>
            <person name="Durkin A.S."/>
            <person name="Daugherty S.C."/>
            <person name="Kothari S.P."/>
            <person name="Giglio M.G."/>
            <person name="Zhou L."/>
            <person name="Haft D.H."/>
            <person name="Selengut J.D."/>
            <person name="Davidsen T.M."/>
            <person name="Yang Q."/>
            <person name="Zafar N."/>
            <person name="Ward N.L."/>
        </authorList>
    </citation>
    <scope>NUCLEOTIDE SEQUENCE [LARGE SCALE GENOMIC DNA]</scope>
    <source>
        <strain>ATCC 15444</strain>
    </source>
</reference>
<keyword id="KW-0028">Amino-acid biosynthesis</keyword>
<keyword id="KW-0963">Cytoplasm</keyword>
<keyword id="KW-0554">One-carbon metabolism</keyword>
<keyword id="KW-0663">Pyridoxal phosphate</keyword>
<keyword id="KW-1185">Reference proteome</keyword>
<keyword id="KW-0808">Transferase</keyword>
<feature type="chain" id="PRO_0000369929" description="Serine hydroxymethyltransferase">
    <location>
        <begin position="1"/>
        <end position="435"/>
    </location>
</feature>
<feature type="binding site" evidence="1">
    <location>
        <position position="133"/>
    </location>
    <ligand>
        <name>(6S)-5,6,7,8-tetrahydrofolate</name>
        <dbReference type="ChEBI" id="CHEBI:57453"/>
    </ligand>
</feature>
<feature type="binding site" evidence="1">
    <location>
        <begin position="137"/>
        <end position="139"/>
    </location>
    <ligand>
        <name>(6S)-5,6,7,8-tetrahydrofolate</name>
        <dbReference type="ChEBI" id="CHEBI:57453"/>
    </ligand>
</feature>
<feature type="site" description="Plays an important role in substrate specificity" evidence="1">
    <location>
        <position position="241"/>
    </location>
</feature>
<feature type="modified residue" description="N6-(pyridoxal phosphate)lysine" evidence="1">
    <location>
        <position position="242"/>
    </location>
</feature>
<sequence>MADSAHVPETLAGGFFSVGLAERDPELAAAINQEATRQQHQIELIASENIVSRAVLEAQGSILTNKYAEGYPGKRYYGGCEFVDIAEELAIERAKKLFNCGFANVQPNSGSQANQGVFQAVLKPGDTILGMSLAAGGHLTHGAKPNQSGKWFNAVQYGVRPEDHLIDFDEVERLARAHRPQMIIAGGSAYPRQIDFKRFREIADDVGAIFLVDMAHFAGLVAGGAHPNPLDHCHIATTTTHKTLRGPRGGMILTNDEALAKKINSAIFPGIQGGPLMHVIAGKAVAFGEALMPEFKTYVEQVVSNARAMAAACRTAGLDVVSDGTDTHLALIDLRPKGVTGRDAEAALERAYITCNKNGIPFDPAPPTVTSGIRVGSPAGTTRGFREEEFIQIGTWIGEIVDALANGNSDAVEARVREEVKALTARFPIYEGLGG</sequence>
<evidence type="ECO:0000255" key="1">
    <source>
        <dbReference type="HAMAP-Rule" id="MF_00051"/>
    </source>
</evidence>
<accession>Q0C0I5</accession>
<gene>
    <name evidence="1" type="primary">glyA</name>
    <name type="ordered locus">HNE_2060</name>
</gene>
<dbReference type="EC" id="2.1.2.1" evidence="1"/>
<dbReference type="EMBL" id="CP000158">
    <property type="protein sequence ID" value="ABI77613.1"/>
    <property type="molecule type" value="Genomic_DNA"/>
</dbReference>
<dbReference type="RefSeq" id="WP_011647057.1">
    <property type="nucleotide sequence ID" value="NC_008358.1"/>
</dbReference>
<dbReference type="SMR" id="Q0C0I5"/>
<dbReference type="STRING" id="228405.HNE_2060"/>
<dbReference type="KEGG" id="hne:HNE_2060"/>
<dbReference type="eggNOG" id="COG0112">
    <property type="taxonomic scope" value="Bacteria"/>
</dbReference>
<dbReference type="HOGENOM" id="CLU_022477_2_1_5"/>
<dbReference type="UniPathway" id="UPA00193"/>
<dbReference type="UniPathway" id="UPA00288">
    <property type="reaction ID" value="UER01023"/>
</dbReference>
<dbReference type="Proteomes" id="UP000001959">
    <property type="component" value="Chromosome"/>
</dbReference>
<dbReference type="GO" id="GO:0005829">
    <property type="term" value="C:cytosol"/>
    <property type="evidence" value="ECO:0007669"/>
    <property type="project" value="TreeGrafter"/>
</dbReference>
<dbReference type="GO" id="GO:0004372">
    <property type="term" value="F:glycine hydroxymethyltransferase activity"/>
    <property type="evidence" value="ECO:0007669"/>
    <property type="project" value="UniProtKB-UniRule"/>
</dbReference>
<dbReference type="GO" id="GO:0030170">
    <property type="term" value="F:pyridoxal phosphate binding"/>
    <property type="evidence" value="ECO:0007669"/>
    <property type="project" value="UniProtKB-UniRule"/>
</dbReference>
<dbReference type="GO" id="GO:0019264">
    <property type="term" value="P:glycine biosynthetic process from serine"/>
    <property type="evidence" value="ECO:0007669"/>
    <property type="project" value="UniProtKB-UniRule"/>
</dbReference>
<dbReference type="GO" id="GO:0035999">
    <property type="term" value="P:tetrahydrofolate interconversion"/>
    <property type="evidence" value="ECO:0007669"/>
    <property type="project" value="UniProtKB-UniRule"/>
</dbReference>
<dbReference type="CDD" id="cd00378">
    <property type="entry name" value="SHMT"/>
    <property type="match status" value="1"/>
</dbReference>
<dbReference type="FunFam" id="3.40.640.10:FF:000001">
    <property type="entry name" value="Serine hydroxymethyltransferase"/>
    <property type="match status" value="1"/>
</dbReference>
<dbReference type="Gene3D" id="3.90.1150.10">
    <property type="entry name" value="Aspartate Aminotransferase, domain 1"/>
    <property type="match status" value="1"/>
</dbReference>
<dbReference type="Gene3D" id="3.40.640.10">
    <property type="entry name" value="Type I PLP-dependent aspartate aminotransferase-like (Major domain)"/>
    <property type="match status" value="1"/>
</dbReference>
<dbReference type="HAMAP" id="MF_00051">
    <property type="entry name" value="SHMT"/>
    <property type="match status" value="1"/>
</dbReference>
<dbReference type="InterPro" id="IPR015424">
    <property type="entry name" value="PyrdxlP-dep_Trfase"/>
</dbReference>
<dbReference type="InterPro" id="IPR015421">
    <property type="entry name" value="PyrdxlP-dep_Trfase_major"/>
</dbReference>
<dbReference type="InterPro" id="IPR015422">
    <property type="entry name" value="PyrdxlP-dep_Trfase_small"/>
</dbReference>
<dbReference type="InterPro" id="IPR001085">
    <property type="entry name" value="Ser_HO-MeTrfase"/>
</dbReference>
<dbReference type="InterPro" id="IPR049943">
    <property type="entry name" value="Ser_HO-MeTrfase-like"/>
</dbReference>
<dbReference type="InterPro" id="IPR019798">
    <property type="entry name" value="Ser_HO-MeTrfase_PLP_BS"/>
</dbReference>
<dbReference type="InterPro" id="IPR039429">
    <property type="entry name" value="SHMT-like_dom"/>
</dbReference>
<dbReference type="NCBIfam" id="NF000586">
    <property type="entry name" value="PRK00011.1"/>
    <property type="match status" value="1"/>
</dbReference>
<dbReference type="PANTHER" id="PTHR11680">
    <property type="entry name" value="SERINE HYDROXYMETHYLTRANSFERASE"/>
    <property type="match status" value="1"/>
</dbReference>
<dbReference type="PANTHER" id="PTHR11680:SF35">
    <property type="entry name" value="SERINE HYDROXYMETHYLTRANSFERASE 1"/>
    <property type="match status" value="1"/>
</dbReference>
<dbReference type="Pfam" id="PF00464">
    <property type="entry name" value="SHMT"/>
    <property type="match status" value="1"/>
</dbReference>
<dbReference type="PIRSF" id="PIRSF000412">
    <property type="entry name" value="SHMT"/>
    <property type="match status" value="1"/>
</dbReference>
<dbReference type="SUPFAM" id="SSF53383">
    <property type="entry name" value="PLP-dependent transferases"/>
    <property type="match status" value="1"/>
</dbReference>
<dbReference type="PROSITE" id="PS00096">
    <property type="entry name" value="SHMT"/>
    <property type="match status" value="1"/>
</dbReference>
<protein>
    <recommendedName>
        <fullName evidence="1">Serine hydroxymethyltransferase</fullName>
        <shortName evidence="1">SHMT</shortName>
        <shortName evidence="1">Serine methylase</shortName>
        <ecNumber evidence="1">2.1.2.1</ecNumber>
    </recommendedName>
</protein>